<feature type="chain" id="PRO_0000282392" description="Cytoplasmic tRNA 2-thiolation protein 1">
    <location>
        <begin position="1"/>
        <end position="420"/>
    </location>
</feature>
<feature type="modified residue" description="Phosphoserine" evidence="1">
    <location>
        <position position="200"/>
    </location>
</feature>
<gene>
    <name type="primary">Ctu1</name>
    <name type="synonym">Atpbd3</name>
    <name type="synonym">Ncs6</name>
</gene>
<organism>
    <name type="scientific">Mus musculus</name>
    <name type="common">Mouse</name>
    <dbReference type="NCBI Taxonomy" id="10090"/>
    <lineage>
        <taxon>Eukaryota</taxon>
        <taxon>Metazoa</taxon>
        <taxon>Chordata</taxon>
        <taxon>Craniata</taxon>
        <taxon>Vertebrata</taxon>
        <taxon>Euteleostomi</taxon>
        <taxon>Mammalia</taxon>
        <taxon>Eutheria</taxon>
        <taxon>Euarchontoglires</taxon>
        <taxon>Glires</taxon>
        <taxon>Rodentia</taxon>
        <taxon>Myomorpha</taxon>
        <taxon>Muroidea</taxon>
        <taxon>Muridae</taxon>
        <taxon>Murinae</taxon>
        <taxon>Mus</taxon>
        <taxon>Mus</taxon>
    </lineage>
</organism>
<protein>
    <recommendedName>
        <fullName evidence="2">Cytoplasmic tRNA 2-thiolation protein 1</fullName>
        <ecNumber evidence="2">2.7.7.-</ecNumber>
    </recommendedName>
    <alternativeName>
        <fullName evidence="2">ATP-binding domain-containing protein 3</fullName>
    </alternativeName>
    <alternativeName>
        <fullName evidence="2">Cytoplasmic tRNA adenylyltransferase 1</fullName>
    </alternativeName>
</protein>
<name>CTU1_MOUSE</name>
<sequence length="420" mass="43823">MPAPTCFSCHKTRAALRRPRSGQALCGSCFCAAFEAEVLHTVLAGHLLPPGAVVAVGASGGKDSTVLAHVLRELAPRLGITLHLVAVDEGIGGYRDAALEAVRSQAARWELPLTIVAYEDLFGGWTMDAVARSTAGSGRSRSCCTFCGVLRRRALEEGARLVGATHIVTGHNADDMAETVLMNFLRGDAGRLARGGVLGSTGEGCALPRCRPLQFASQKEVVLYAHFRHLRYFSEECVYAPEAFRGHARDLLKLLEAARPSAVLDLVHSAERLALAPAAKPPPPGTCSRCGALASHKLCQACALLDGLNRGLPRLAIGKGRRVLQVEPPQPGNPSLVTSDPVAPAGPCTCKQPKDKANPCGNGGDRAGATCVSQCDLSPGNGEDRAGATCVSQRDLSLGNGGDRAGATCVSQCDLSPVAE</sequence>
<keyword id="KW-0963">Cytoplasm</keyword>
<keyword id="KW-0597">Phosphoprotein</keyword>
<keyword id="KW-1185">Reference proteome</keyword>
<keyword id="KW-0694">RNA-binding</keyword>
<keyword id="KW-0808">Transferase</keyword>
<keyword id="KW-0819">tRNA processing</keyword>
<keyword id="KW-0820">tRNA-binding</keyword>
<evidence type="ECO:0000250" key="1">
    <source>
        <dbReference type="UniProtKB" id="Q7Z7A3"/>
    </source>
</evidence>
<evidence type="ECO:0000255" key="2">
    <source>
        <dbReference type="HAMAP-Rule" id="MF_03053"/>
    </source>
</evidence>
<proteinExistence type="evidence at transcript level"/>
<dbReference type="EC" id="2.7.7.-" evidence="2"/>
<dbReference type="EMBL" id="AK155284">
    <property type="protein sequence ID" value="BAE33164.1"/>
    <property type="molecule type" value="mRNA"/>
</dbReference>
<dbReference type="EMBL" id="BC005752">
    <property type="protein sequence ID" value="AAH05752.1"/>
    <property type="molecule type" value="mRNA"/>
</dbReference>
<dbReference type="CCDS" id="CCDS21179.1"/>
<dbReference type="RefSeq" id="NP_663557.1">
    <property type="nucleotide sequence ID" value="NM_145582.1"/>
</dbReference>
<dbReference type="SMR" id="Q99J10"/>
<dbReference type="BioGRID" id="231384">
    <property type="interactions" value="4"/>
</dbReference>
<dbReference type="FunCoup" id="Q99J10">
    <property type="interactions" value="1338"/>
</dbReference>
<dbReference type="STRING" id="10090.ENSMUSP00000036770"/>
<dbReference type="iPTMnet" id="Q99J10"/>
<dbReference type="PhosphoSitePlus" id="Q99J10"/>
<dbReference type="SwissPalm" id="Q99J10"/>
<dbReference type="PaxDb" id="10090-ENSMUSP00000036770"/>
<dbReference type="PeptideAtlas" id="Q99J10"/>
<dbReference type="ProteomicsDB" id="279296"/>
<dbReference type="Pumba" id="Q99J10"/>
<dbReference type="Antibodypedia" id="52772">
    <property type="antibodies" value="116 antibodies from 22 providers"/>
</dbReference>
<dbReference type="DNASU" id="233189"/>
<dbReference type="Ensembl" id="ENSMUST00000038332.9">
    <property type="protein sequence ID" value="ENSMUSP00000036770.9"/>
    <property type="gene ID" value="ENSMUSG00000038888.9"/>
</dbReference>
<dbReference type="GeneID" id="233189"/>
<dbReference type="KEGG" id="mmu:233189"/>
<dbReference type="UCSC" id="uc009gnh.1">
    <property type="organism name" value="mouse"/>
</dbReference>
<dbReference type="AGR" id="MGI:2385277"/>
<dbReference type="CTD" id="90353"/>
<dbReference type="MGI" id="MGI:2385277">
    <property type="gene designation" value="Ctu1"/>
</dbReference>
<dbReference type="VEuPathDB" id="HostDB:ENSMUSG00000038888"/>
<dbReference type="eggNOG" id="KOG2840">
    <property type="taxonomic scope" value="Eukaryota"/>
</dbReference>
<dbReference type="GeneTree" id="ENSGT00390000001041"/>
<dbReference type="HOGENOM" id="CLU_026481_1_0_1"/>
<dbReference type="InParanoid" id="Q99J10"/>
<dbReference type="OMA" id="KPVRGIC"/>
<dbReference type="OrthoDB" id="198857at2759"/>
<dbReference type="PhylomeDB" id="Q99J10"/>
<dbReference type="TreeFam" id="TF352405"/>
<dbReference type="UniPathway" id="UPA00988"/>
<dbReference type="BioGRID-ORCS" id="233189">
    <property type="hits" value="11 hits in 78 CRISPR screens"/>
</dbReference>
<dbReference type="ChiTaRS" id="Ctu1">
    <property type="organism name" value="mouse"/>
</dbReference>
<dbReference type="PRO" id="PR:Q99J10"/>
<dbReference type="Proteomes" id="UP000000589">
    <property type="component" value="Chromosome 7"/>
</dbReference>
<dbReference type="RNAct" id="Q99J10">
    <property type="molecule type" value="protein"/>
</dbReference>
<dbReference type="Bgee" id="ENSMUSG00000038888">
    <property type="expression patterns" value="Expressed in dorsal pancreas and 243 other cell types or tissues"/>
</dbReference>
<dbReference type="GO" id="GO:0005829">
    <property type="term" value="C:cytosol"/>
    <property type="evidence" value="ECO:0000250"/>
    <property type="project" value="UniProtKB"/>
</dbReference>
<dbReference type="GO" id="GO:0005739">
    <property type="term" value="C:mitochondrion"/>
    <property type="evidence" value="ECO:0007005"/>
    <property type="project" value="MGI"/>
</dbReference>
<dbReference type="GO" id="GO:0016779">
    <property type="term" value="F:nucleotidyltransferase activity"/>
    <property type="evidence" value="ECO:0007669"/>
    <property type="project" value="UniProtKB-UniRule"/>
</dbReference>
<dbReference type="GO" id="GO:0000049">
    <property type="term" value="F:tRNA binding"/>
    <property type="evidence" value="ECO:0000250"/>
    <property type="project" value="UniProtKB"/>
</dbReference>
<dbReference type="GO" id="GO:0032447">
    <property type="term" value="P:protein urmylation"/>
    <property type="evidence" value="ECO:0007669"/>
    <property type="project" value="UniProtKB-UniRule"/>
</dbReference>
<dbReference type="GO" id="GO:0034227">
    <property type="term" value="P:tRNA thio-modification"/>
    <property type="evidence" value="ECO:0000250"/>
    <property type="project" value="UniProtKB"/>
</dbReference>
<dbReference type="GO" id="GO:0002098">
    <property type="term" value="P:tRNA wobble uridine modification"/>
    <property type="evidence" value="ECO:0000250"/>
    <property type="project" value="UniProtKB"/>
</dbReference>
<dbReference type="CDD" id="cd01713">
    <property type="entry name" value="CTU1-like"/>
    <property type="match status" value="1"/>
</dbReference>
<dbReference type="FunFam" id="3.40.50.620:FF:000132">
    <property type="entry name" value="Cytoplasmic tRNA 2-thiolation protein 1"/>
    <property type="match status" value="1"/>
</dbReference>
<dbReference type="Gene3D" id="3.40.50.620">
    <property type="entry name" value="HUPs"/>
    <property type="match status" value="1"/>
</dbReference>
<dbReference type="HAMAP" id="MF_03053">
    <property type="entry name" value="CTU1"/>
    <property type="match status" value="1"/>
</dbReference>
<dbReference type="InterPro" id="IPR056369">
    <property type="entry name" value="CTU1-like_ATP-bd"/>
</dbReference>
<dbReference type="InterPro" id="IPR032442">
    <property type="entry name" value="CTU1_C"/>
</dbReference>
<dbReference type="InterPro" id="IPR000541">
    <property type="entry name" value="Ncs6/Tuc1/Ctu1"/>
</dbReference>
<dbReference type="InterPro" id="IPR014729">
    <property type="entry name" value="Rossmann-like_a/b/a_fold"/>
</dbReference>
<dbReference type="InterPro" id="IPR011063">
    <property type="entry name" value="TilS/TtcA_N"/>
</dbReference>
<dbReference type="PANTHER" id="PTHR11807">
    <property type="entry name" value="ATPASES OF THE PP SUPERFAMILY-RELATED"/>
    <property type="match status" value="1"/>
</dbReference>
<dbReference type="PANTHER" id="PTHR11807:SF12">
    <property type="entry name" value="CYTOPLASMIC TRNA 2-THIOLATION PROTEIN 1"/>
    <property type="match status" value="1"/>
</dbReference>
<dbReference type="Pfam" id="PF01171">
    <property type="entry name" value="ATP_bind_3"/>
    <property type="match status" value="1"/>
</dbReference>
<dbReference type="Pfam" id="PF16503">
    <property type="entry name" value="zn-ribbon_14"/>
    <property type="match status" value="1"/>
</dbReference>
<dbReference type="SUPFAM" id="SSF52402">
    <property type="entry name" value="Adenine nucleotide alpha hydrolases-like"/>
    <property type="match status" value="1"/>
</dbReference>
<accession>Q99J10</accession>
<reference key="1">
    <citation type="journal article" date="2005" name="Science">
        <title>The transcriptional landscape of the mammalian genome.</title>
        <authorList>
            <person name="Carninci P."/>
            <person name="Kasukawa T."/>
            <person name="Katayama S."/>
            <person name="Gough J."/>
            <person name="Frith M.C."/>
            <person name="Maeda N."/>
            <person name="Oyama R."/>
            <person name="Ravasi T."/>
            <person name="Lenhard B."/>
            <person name="Wells C."/>
            <person name="Kodzius R."/>
            <person name="Shimokawa K."/>
            <person name="Bajic V.B."/>
            <person name="Brenner S.E."/>
            <person name="Batalov S."/>
            <person name="Forrest A.R."/>
            <person name="Zavolan M."/>
            <person name="Davis M.J."/>
            <person name="Wilming L.G."/>
            <person name="Aidinis V."/>
            <person name="Allen J.E."/>
            <person name="Ambesi-Impiombato A."/>
            <person name="Apweiler R."/>
            <person name="Aturaliya R.N."/>
            <person name="Bailey T.L."/>
            <person name="Bansal M."/>
            <person name="Baxter L."/>
            <person name="Beisel K.W."/>
            <person name="Bersano T."/>
            <person name="Bono H."/>
            <person name="Chalk A.M."/>
            <person name="Chiu K.P."/>
            <person name="Choudhary V."/>
            <person name="Christoffels A."/>
            <person name="Clutterbuck D.R."/>
            <person name="Crowe M.L."/>
            <person name="Dalla E."/>
            <person name="Dalrymple B.P."/>
            <person name="de Bono B."/>
            <person name="Della Gatta G."/>
            <person name="di Bernardo D."/>
            <person name="Down T."/>
            <person name="Engstrom P."/>
            <person name="Fagiolini M."/>
            <person name="Faulkner G."/>
            <person name="Fletcher C.F."/>
            <person name="Fukushima T."/>
            <person name="Furuno M."/>
            <person name="Futaki S."/>
            <person name="Gariboldi M."/>
            <person name="Georgii-Hemming P."/>
            <person name="Gingeras T.R."/>
            <person name="Gojobori T."/>
            <person name="Green R.E."/>
            <person name="Gustincich S."/>
            <person name="Harbers M."/>
            <person name="Hayashi Y."/>
            <person name="Hensch T.K."/>
            <person name="Hirokawa N."/>
            <person name="Hill D."/>
            <person name="Huminiecki L."/>
            <person name="Iacono M."/>
            <person name="Ikeo K."/>
            <person name="Iwama A."/>
            <person name="Ishikawa T."/>
            <person name="Jakt M."/>
            <person name="Kanapin A."/>
            <person name="Katoh M."/>
            <person name="Kawasawa Y."/>
            <person name="Kelso J."/>
            <person name="Kitamura H."/>
            <person name="Kitano H."/>
            <person name="Kollias G."/>
            <person name="Krishnan S.P."/>
            <person name="Kruger A."/>
            <person name="Kummerfeld S.K."/>
            <person name="Kurochkin I.V."/>
            <person name="Lareau L.F."/>
            <person name="Lazarevic D."/>
            <person name="Lipovich L."/>
            <person name="Liu J."/>
            <person name="Liuni S."/>
            <person name="McWilliam S."/>
            <person name="Madan Babu M."/>
            <person name="Madera M."/>
            <person name="Marchionni L."/>
            <person name="Matsuda H."/>
            <person name="Matsuzawa S."/>
            <person name="Miki H."/>
            <person name="Mignone F."/>
            <person name="Miyake S."/>
            <person name="Morris K."/>
            <person name="Mottagui-Tabar S."/>
            <person name="Mulder N."/>
            <person name="Nakano N."/>
            <person name="Nakauchi H."/>
            <person name="Ng P."/>
            <person name="Nilsson R."/>
            <person name="Nishiguchi S."/>
            <person name="Nishikawa S."/>
            <person name="Nori F."/>
            <person name="Ohara O."/>
            <person name="Okazaki Y."/>
            <person name="Orlando V."/>
            <person name="Pang K.C."/>
            <person name="Pavan W.J."/>
            <person name="Pavesi G."/>
            <person name="Pesole G."/>
            <person name="Petrovsky N."/>
            <person name="Piazza S."/>
            <person name="Reed J."/>
            <person name="Reid J.F."/>
            <person name="Ring B.Z."/>
            <person name="Ringwald M."/>
            <person name="Rost B."/>
            <person name="Ruan Y."/>
            <person name="Salzberg S.L."/>
            <person name="Sandelin A."/>
            <person name="Schneider C."/>
            <person name="Schoenbach C."/>
            <person name="Sekiguchi K."/>
            <person name="Semple C.A."/>
            <person name="Seno S."/>
            <person name="Sessa L."/>
            <person name="Sheng Y."/>
            <person name="Shibata Y."/>
            <person name="Shimada H."/>
            <person name="Shimada K."/>
            <person name="Silva D."/>
            <person name="Sinclair B."/>
            <person name="Sperling S."/>
            <person name="Stupka E."/>
            <person name="Sugiura K."/>
            <person name="Sultana R."/>
            <person name="Takenaka Y."/>
            <person name="Taki K."/>
            <person name="Tammoja K."/>
            <person name="Tan S.L."/>
            <person name="Tang S."/>
            <person name="Taylor M.S."/>
            <person name="Tegner J."/>
            <person name="Teichmann S.A."/>
            <person name="Ueda H.R."/>
            <person name="van Nimwegen E."/>
            <person name="Verardo R."/>
            <person name="Wei C.L."/>
            <person name="Yagi K."/>
            <person name="Yamanishi H."/>
            <person name="Zabarovsky E."/>
            <person name="Zhu S."/>
            <person name="Zimmer A."/>
            <person name="Hide W."/>
            <person name="Bult C."/>
            <person name="Grimmond S.M."/>
            <person name="Teasdale R.D."/>
            <person name="Liu E.T."/>
            <person name="Brusic V."/>
            <person name="Quackenbush J."/>
            <person name="Wahlestedt C."/>
            <person name="Mattick J.S."/>
            <person name="Hume D.A."/>
            <person name="Kai C."/>
            <person name="Sasaki D."/>
            <person name="Tomaru Y."/>
            <person name="Fukuda S."/>
            <person name="Kanamori-Katayama M."/>
            <person name="Suzuki M."/>
            <person name="Aoki J."/>
            <person name="Arakawa T."/>
            <person name="Iida J."/>
            <person name="Imamura K."/>
            <person name="Itoh M."/>
            <person name="Kato T."/>
            <person name="Kawaji H."/>
            <person name="Kawagashira N."/>
            <person name="Kawashima T."/>
            <person name="Kojima M."/>
            <person name="Kondo S."/>
            <person name="Konno H."/>
            <person name="Nakano K."/>
            <person name="Ninomiya N."/>
            <person name="Nishio T."/>
            <person name="Okada M."/>
            <person name="Plessy C."/>
            <person name="Shibata K."/>
            <person name="Shiraki T."/>
            <person name="Suzuki S."/>
            <person name="Tagami M."/>
            <person name="Waki K."/>
            <person name="Watahiki A."/>
            <person name="Okamura-Oho Y."/>
            <person name="Suzuki H."/>
            <person name="Kawai J."/>
            <person name="Hayashizaki Y."/>
        </authorList>
    </citation>
    <scope>NUCLEOTIDE SEQUENCE [LARGE SCALE MRNA]</scope>
    <source>
        <strain>NOD</strain>
    </source>
</reference>
<reference key="2">
    <citation type="journal article" date="2004" name="Genome Res.">
        <title>The status, quality, and expansion of the NIH full-length cDNA project: the Mammalian Gene Collection (MGC).</title>
        <authorList>
            <consortium name="The MGC Project Team"/>
        </authorList>
    </citation>
    <scope>NUCLEOTIDE SEQUENCE [LARGE SCALE MRNA]</scope>
    <source>
        <strain>NMRI</strain>
        <tissue>Mammary tumor</tissue>
    </source>
</reference>
<comment type="function">
    <text evidence="2">Plays a central role in 2-thiolation of mcm(5)S(2)U at tRNA wobble positions of tRNA(Lys), tRNA(Glu) and tRNA(Gln). Directly binds tRNAs and probably acts by catalyzing adenylation of tRNAs, an intermediate required for 2-thiolation. It is unclear whether it acts as a sulfurtransferase that transfers sulfur from thiocarboxylated URM1 onto the uridine of tRNAs at wobble position.</text>
</comment>
<comment type="pathway">
    <text evidence="2">tRNA modification; 5-methoxycarbonylmethyl-2-thiouridine-tRNA biosynthesis.</text>
</comment>
<comment type="subunit">
    <text evidence="2">Component of a complex at least composed of URM1, CTU2/NCS2 and CTU1/ATPBD3. May form a heterodimer with CTU2/NCS2.</text>
</comment>
<comment type="subcellular location">
    <subcellularLocation>
        <location evidence="2">Cytoplasm</location>
    </subcellularLocation>
</comment>
<comment type="similarity">
    <text evidence="2">Belongs to the TtcA family. CTU1/NCS6/ATPBD3 subfamily.</text>
</comment>